<keyword id="KW-0325">Glycoprotein</keyword>
<keyword id="KW-0646">Protease inhibitor</keyword>
<keyword id="KW-0873">Pyrrolidone carboxylic acid</keyword>
<keyword id="KW-0722">Serine protease inhibitor</keyword>
<keyword id="KW-0732">Signal</keyword>
<accession>O54760</accession>
<protein>
    <recommendedName>
        <fullName>Alpha-1-antitrypsin-like protein CM55-SI</fullName>
    </recommendedName>
</protein>
<evidence type="ECO:0000250" key="1"/>
<evidence type="ECO:0000255" key="2"/>
<evidence type="ECO:0000305" key="3"/>
<feature type="signal peptide" evidence="2">
    <location>
        <begin position="1"/>
        <end position="24"/>
    </location>
</feature>
<feature type="chain" id="PRO_0000032406" description="Alpha-1-antitrypsin-like protein CM55-SI">
    <location>
        <begin position="25"/>
        <end position="413"/>
    </location>
</feature>
<feature type="region of interest" description="RCL">
    <location>
        <begin position="368"/>
        <end position="387"/>
    </location>
</feature>
<feature type="site" description="Reactive bond" evidence="1">
    <location>
        <begin position="377"/>
        <end position="378"/>
    </location>
</feature>
<feature type="modified residue" description="Pyrrolidone carboxylic acid" evidence="2">
    <location>
        <position position="25"/>
    </location>
</feature>
<feature type="glycosylation site" description="N-linked (GlcNAc...) asparagine" evidence="2">
    <location>
        <position position="65"/>
    </location>
</feature>
<feature type="glycosylation site" description="N-linked (GlcNAc...) asparagine" evidence="2">
    <location>
        <position position="102"/>
    </location>
</feature>
<feature type="glycosylation site" description="N-linked (GlcNAc...) asparagine" evidence="2">
    <location>
        <position position="165"/>
    </location>
</feature>
<feature type="glycosylation site" description="N-linked (GlcNAc...) asparagine" evidence="2">
    <location>
        <position position="266"/>
    </location>
</feature>
<comment type="tissue specificity">
    <text>Expressed in liver.</text>
</comment>
<comment type="domain">
    <text evidence="1">The reactive center loop (RCL) extends out from the body of the protein and directs binding to the target protease. The protease cleaves the serpin at the reactive site within the RCL, establishing a covalent linkage between the serpin reactive site and the active site of the protease. The resulting inactive serpin-protease complex is highly stable (By similarity).</text>
</comment>
<comment type="similarity">
    <text evidence="3">Belongs to the serpin family.</text>
</comment>
<sequence>MPSSISWGLLLLAALSCLGPGSLAQDAQETEASKQDQEHPASHKIAPHLAEFALSFYRVLARQSNTTNIFFSPVSIATALAMLSLGTKGDTHTQILEGLDFNLTEMAEADIHQGFQHLLQTLNRPNTQLQLTSGNGLFIDRNLKLLDKFLEDVKSLYHSEAFSTNFTNTEEARQQINSYVEKGTKGKIVELLKELDRDTVLALVNYIFFKGKWKQPFNEEQTREKDFHVDEATTVRVPMMNRLGMFHLHHCSTLASWVLQMDYLGNATAIFLLPDKGKMRHLEDTVTTEILTKFLKNRETTKSQLYFPKVSISGTYDLKDVLSSLGITKVFSSEADLSGVTEEAPLTVSKALHKAVLDIDEEGTEAAGGTVLGNIRSILRYEVIFDRPFLVVIYEHHTKSPLFVGKVVNPTQQ</sequence>
<dbReference type="EMBL" id="AB000549">
    <property type="protein sequence ID" value="BAA24419.1"/>
    <property type="molecule type" value="mRNA"/>
</dbReference>
<dbReference type="SMR" id="O54760"/>
<dbReference type="MEROPS" id="I04.001"/>
<dbReference type="GO" id="GO:0005615">
    <property type="term" value="C:extracellular space"/>
    <property type="evidence" value="ECO:0007669"/>
    <property type="project" value="InterPro"/>
</dbReference>
<dbReference type="GO" id="GO:0004867">
    <property type="term" value="F:serine-type endopeptidase inhibitor activity"/>
    <property type="evidence" value="ECO:0007669"/>
    <property type="project" value="UniProtKB-KW"/>
</dbReference>
<dbReference type="CDD" id="cd02056">
    <property type="entry name" value="serpinA1_A1AT"/>
    <property type="match status" value="1"/>
</dbReference>
<dbReference type="FunFam" id="2.30.39.10:FF:000003">
    <property type="entry name" value="alpha-1-antitrypsin isoform X1"/>
    <property type="match status" value="1"/>
</dbReference>
<dbReference type="FunFam" id="3.30.497.10:FF:000001">
    <property type="entry name" value="Serine protease inhibitor"/>
    <property type="match status" value="1"/>
</dbReference>
<dbReference type="FunFam" id="2.10.310.10:FF:000001">
    <property type="entry name" value="Serpin family A member 1"/>
    <property type="match status" value="1"/>
</dbReference>
<dbReference type="Gene3D" id="2.30.39.10">
    <property type="entry name" value="Alpha-1-antitrypsin, domain 1"/>
    <property type="match status" value="1"/>
</dbReference>
<dbReference type="Gene3D" id="3.30.497.10">
    <property type="entry name" value="Antithrombin, subunit I, domain 2"/>
    <property type="match status" value="1"/>
</dbReference>
<dbReference type="Gene3D" id="2.10.310.10">
    <property type="entry name" value="Serpins superfamily"/>
    <property type="match status" value="1"/>
</dbReference>
<dbReference type="InterPro" id="IPR023795">
    <property type="entry name" value="Serpin_CS"/>
</dbReference>
<dbReference type="InterPro" id="IPR023796">
    <property type="entry name" value="Serpin_dom"/>
</dbReference>
<dbReference type="InterPro" id="IPR000215">
    <property type="entry name" value="Serpin_fam"/>
</dbReference>
<dbReference type="InterPro" id="IPR036186">
    <property type="entry name" value="Serpin_sf"/>
</dbReference>
<dbReference type="InterPro" id="IPR042178">
    <property type="entry name" value="Serpin_sf_1"/>
</dbReference>
<dbReference type="InterPro" id="IPR042185">
    <property type="entry name" value="Serpin_sf_2"/>
</dbReference>
<dbReference type="PANTHER" id="PTHR11461:SF165">
    <property type="entry name" value="ALPHA-1-ANTITRYPSIN"/>
    <property type="match status" value="1"/>
</dbReference>
<dbReference type="PANTHER" id="PTHR11461">
    <property type="entry name" value="SERINE PROTEASE INHIBITOR, SERPIN"/>
    <property type="match status" value="1"/>
</dbReference>
<dbReference type="Pfam" id="PF00079">
    <property type="entry name" value="Serpin"/>
    <property type="match status" value="1"/>
</dbReference>
<dbReference type="SMART" id="SM00093">
    <property type="entry name" value="SERPIN"/>
    <property type="match status" value="1"/>
</dbReference>
<dbReference type="SUPFAM" id="SSF56574">
    <property type="entry name" value="Serpins"/>
    <property type="match status" value="1"/>
</dbReference>
<dbReference type="PROSITE" id="PS00284">
    <property type="entry name" value="SERPIN"/>
    <property type="match status" value="1"/>
</dbReference>
<name>ALSI_TAMSI</name>
<organism>
    <name type="scientific">Tamias sibiricus</name>
    <name type="common">Siberian chipmunk</name>
    <name type="synonym">Eutamias sibiricus</name>
    <dbReference type="NCBI Taxonomy" id="64680"/>
    <lineage>
        <taxon>Eukaryota</taxon>
        <taxon>Metazoa</taxon>
        <taxon>Chordata</taxon>
        <taxon>Craniata</taxon>
        <taxon>Vertebrata</taxon>
        <taxon>Euteleostomi</taxon>
        <taxon>Mammalia</taxon>
        <taxon>Eutheria</taxon>
        <taxon>Euarchontoglires</taxon>
        <taxon>Glires</taxon>
        <taxon>Rodentia</taxon>
        <taxon>Sciuromorpha</taxon>
        <taxon>Sciuridae</taxon>
        <taxon>Xerinae</taxon>
        <taxon>Marmotini</taxon>
        <taxon>Tamias</taxon>
    </lineage>
</organism>
<proteinExistence type="evidence at transcript level"/>
<reference key="1">
    <citation type="journal article" date="1997" name="Gene">
        <title>Expression of multiple alpha1-antitrypsin-like genes in hibernating species of the squirrel family.</title>
        <authorList>
            <person name="Takamatsu N."/>
            <person name="Kojima M."/>
            <person name="Taniyama M."/>
            <person name="Ohba K."/>
            <person name="Uematsu T."/>
            <person name="Segawa C."/>
            <person name="Tsutou S."/>
            <person name="Watanabe M."/>
            <person name="Kondo J."/>
            <person name="Kondo N."/>
            <person name="Shiba T."/>
        </authorList>
    </citation>
    <scope>NUCLEOTIDE SEQUENCE [MRNA]</scope>
    <source>
        <tissue>Liver</tissue>
    </source>
</reference>